<proteinExistence type="inferred from homology"/>
<reference key="1">
    <citation type="journal article" date="2004" name="Nat. Biotechnol.">
        <title>Complete genome sequence of the metabolically versatile photosynthetic bacterium Rhodopseudomonas palustris.</title>
        <authorList>
            <person name="Larimer F.W."/>
            <person name="Chain P."/>
            <person name="Hauser L."/>
            <person name="Lamerdin J.E."/>
            <person name="Malfatti S."/>
            <person name="Do L."/>
            <person name="Land M.L."/>
            <person name="Pelletier D.A."/>
            <person name="Beatty J.T."/>
            <person name="Lang A.S."/>
            <person name="Tabita F.R."/>
            <person name="Gibson J.L."/>
            <person name="Hanson T.E."/>
            <person name="Bobst C."/>
            <person name="Torres y Torres J.L."/>
            <person name="Peres C."/>
            <person name="Harrison F.H."/>
            <person name="Gibson J."/>
            <person name="Harwood C.S."/>
        </authorList>
    </citation>
    <scope>NUCLEOTIDE SEQUENCE [LARGE SCALE GENOMIC DNA]</scope>
    <source>
        <strain>ATCC BAA-98 / CGA009</strain>
    </source>
</reference>
<name>KDSA_RHOPA</name>
<protein>
    <recommendedName>
        <fullName evidence="1">2-dehydro-3-deoxyphosphooctonate aldolase</fullName>
        <ecNumber evidence="1">2.5.1.55</ecNumber>
    </recommendedName>
    <alternativeName>
        <fullName evidence="1">3-deoxy-D-manno-octulosonic acid 8-phosphate synthase</fullName>
    </alternativeName>
    <alternativeName>
        <fullName evidence="1">KDO-8-phosphate synthase</fullName>
        <shortName evidence="1">KDO 8-P synthase</shortName>
        <shortName evidence="1">KDOPS</shortName>
    </alternativeName>
    <alternativeName>
        <fullName evidence="1">Phospho-2-dehydro-3-deoxyoctonate aldolase</fullName>
    </alternativeName>
</protein>
<keyword id="KW-0963">Cytoplasm</keyword>
<keyword id="KW-0448">Lipopolysaccharide biosynthesis</keyword>
<keyword id="KW-0808">Transferase</keyword>
<comment type="catalytic activity">
    <reaction evidence="1">
        <text>D-arabinose 5-phosphate + phosphoenolpyruvate + H2O = 3-deoxy-alpha-D-manno-2-octulosonate-8-phosphate + phosphate</text>
        <dbReference type="Rhea" id="RHEA:14053"/>
        <dbReference type="ChEBI" id="CHEBI:15377"/>
        <dbReference type="ChEBI" id="CHEBI:43474"/>
        <dbReference type="ChEBI" id="CHEBI:57693"/>
        <dbReference type="ChEBI" id="CHEBI:58702"/>
        <dbReference type="ChEBI" id="CHEBI:85985"/>
        <dbReference type="EC" id="2.5.1.55"/>
    </reaction>
</comment>
<comment type="pathway">
    <text evidence="1">Carbohydrate biosynthesis; 3-deoxy-D-manno-octulosonate biosynthesis; 3-deoxy-D-manno-octulosonate from D-ribulose 5-phosphate: step 2/3.</text>
</comment>
<comment type="pathway">
    <text evidence="1">Bacterial outer membrane biogenesis; lipopolysaccharide biosynthesis.</text>
</comment>
<comment type="subcellular location">
    <subcellularLocation>
        <location evidence="1">Cytoplasm</location>
    </subcellularLocation>
</comment>
<comment type="similarity">
    <text evidence="1">Belongs to the KdsA family.</text>
</comment>
<accession>P61657</accession>
<evidence type="ECO:0000255" key="1">
    <source>
        <dbReference type="HAMAP-Rule" id="MF_00056"/>
    </source>
</evidence>
<dbReference type="EC" id="2.5.1.55" evidence="1"/>
<dbReference type="EMBL" id="BX572602">
    <property type="protein sequence ID" value="CAE28320.1"/>
    <property type="molecule type" value="Genomic_DNA"/>
</dbReference>
<dbReference type="RefSeq" id="WP_011158428.1">
    <property type="nucleotide sequence ID" value="NZ_CP116810.1"/>
</dbReference>
<dbReference type="SMR" id="P61657"/>
<dbReference type="STRING" id="258594.RPA2879"/>
<dbReference type="GeneID" id="66893960"/>
<dbReference type="eggNOG" id="COG2877">
    <property type="taxonomic scope" value="Bacteria"/>
</dbReference>
<dbReference type="HOGENOM" id="CLU_036666_0_0_5"/>
<dbReference type="PhylomeDB" id="P61657"/>
<dbReference type="UniPathway" id="UPA00030"/>
<dbReference type="UniPathway" id="UPA00357">
    <property type="reaction ID" value="UER00474"/>
</dbReference>
<dbReference type="GO" id="GO:0005737">
    <property type="term" value="C:cytoplasm"/>
    <property type="evidence" value="ECO:0007669"/>
    <property type="project" value="UniProtKB-SubCell"/>
</dbReference>
<dbReference type="GO" id="GO:0008676">
    <property type="term" value="F:3-deoxy-8-phosphooctulonate synthase activity"/>
    <property type="evidence" value="ECO:0007669"/>
    <property type="project" value="UniProtKB-UniRule"/>
</dbReference>
<dbReference type="GO" id="GO:0019294">
    <property type="term" value="P:keto-3-deoxy-D-manno-octulosonic acid biosynthetic process"/>
    <property type="evidence" value="ECO:0007669"/>
    <property type="project" value="UniProtKB-UniRule"/>
</dbReference>
<dbReference type="Gene3D" id="3.20.20.70">
    <property type="entry name" value="Aldolase class I"/>
    <property type="match status" value="1"/>
</dbReference>
<dbReference type="HAMAP" id="MF_00056">
    <property type="entry name" value="KDO8P_synth"/>
    <property type="match status" value="1"/>
</dbReference>
<dbReference type="InterPro" id="IPR013785">
    <property type="entry name" value="Aldolase_TIM"/>
</dbReference>
<dbReference type="InterPro" id="IPR006218">
    <property type="entry name" value="DAHP1/KDSA"/>
</dbReference>
<dbReference type="InterPro" id="IPR006269">
    <property type="entry name" value="KDO8P_synthase"/>
</dbReference>
<dbReference type="NCBIfam" id="TIGR01362">
    <property type="entry name" value="KDO8P_synth"/>
    <property type="match status" value="1"/>
</dbReference>
<dbReference type="NCBIfam" id="NF003543">
    <property type="entry name" value="PRK05198.1"/>
    <property type="match status" value="1"/>
</dbReference>
<dbReference type="PANTHER" id="PTHR21057">
    <property type="entry name" value="PHOSPHO-2-DEHYDRO-3-DEOXYHEPTONATE ALDOLASE"/>
    <property type="match status" value="1"/>
</dbReference>
<dbReference type="Pfam" id="PF00793">
    <property type="entry name" value="DAHP_synth_1"/>
    <property type="match status" value="1"/>
</dbReference>
<dbReference type="SUPFAM" id="SSF51569">
    <property type="entry name" value="Aldolase"/>
    <property type="match status" value="1"/>
</dbReference>
<sequence length="287" mass="30068">MNKSIAPATSVVAGNVKFGNALPLSVIAGPCQLESRAHALEVASALKEIATRLGIGLVYKTSFDKANRTSAASARGLGLDAALPIFAEIRDHLGLPVLTDVHENEQCARAAEAVDILQIPAFLCRQTDLLLAAAATGRIVNVKKGQFLAPWDMGNVVSKITHAGNSKVLVTERGVSFGYNTLVSDMRALPIMAKTTGAPVIFDATHSVQQPGGKGTSSGGEREYVPVLARAAVAVGVAGVFIETHPDPDHAPSDGPNMVPLREFEALIKTLMEFDALAKKRSTVGAV</sequence>
<gene>
    <name evidence="1" type="primary">kdsA</name>
    <name type="ordered locus">RPA2879</name>
</gene>
<organism>
    <name type="scientific">Rhodopseudomonas palustris (strain ATCC BAA-98 / CGA009)</name>
    <dbReference type="NCBI Taxonomy" id="258594"/>
    <lineage>
        <taxon>Bacteria</taxon>
        <taxon>Pseudomonadati</taxon>
        <taxon>Pseudomonadota</taxon>
        <taxon>Alphaproteobacteria</taxon>
        <taxon>Hyphomicrobiales</taxon>
        <taxon>Nitrobacteraceae</taxon>
        <taxon>Rhodopseudomonas</taxon>
    </lineage>
</organism>
<feature type="chain" id="PRO_0000187158" description="2-dehydro-3-deoxyphosphooctonate aldolase">
    <location>
        <begin position="1"/>
        <end position="287"/>
    </location>
</feature>